<keyword id="KW-0002">3D-structure</keyword>
<keyword id="KW-0933">Apicoplast</keyword>
<keyword id="KW-0963">Cytoplasm</keyword>
<keyword id="KW-1015">Disulfide bond</keyword>
<keyword id="KW-0489">Methyltransferase</keyword>
<keyword id="KW-0496">Mitochondrion</keyword>
<keyword id="KW-0539">Nucleus</keyword>
<keyword id="KW-0554">One-carbon metabolism</keyword>
<keyword id="KW-0934">Plastid</keyword>
<keyword id="KW-0663">Pyridoxal phosphate</keyword>
<keyword id="KW-1185">Reference proteome</keyword>
<keyword id="KW-0808">Transferase</keyword>
<gene>
    <name evidence="6" type="primary">SHMT</name>
    <name evidence="11" type="ORF">PF3D7_1235600</name>
</gene>
<evidence type="ECO:0000255" key="1">
    <source>
        <dbReference type="PIRSR" id="PIRSR000412-50"/>
    </source>
</evidence>
<evidence type="ECO:0000269" key="2">
    <source>
    </source>
</evidence>
<evidence type="ECO:0000269" key="3">
    <source>
    </source>
</evidence>
<evidence type="ECO:0000269" key="4">
    <source>
    </source>
</evidence>
<evidence type="ECO:0000269" key="5">
    <source>
    </source>
</evidence>
<evidence type="ECO:0000303" key="6">
    <source>
    </source>
</evidence>
<evidence type="ECO:0000303" key="7">
    <source>
    </source>
</evidence>
<evidence type="ECO:0000305" key="8"/>
<evidence type="ECO:0000305" key="9">
    <source>
    </source>
</evidence>
<evidence type="ECO:0000305" key="10">
    <source>
    </source>
</evidence>
<evidence type="ECO:0000312" key="11">
    <source>
        <dbReference type="EMBL" id="CZT99515.1"/>
    </source>
</evidence>
<evidence type="ECO:0000312" key="12">
    <source>
        <dbReference type="Proteomes" id="UP000001450"/>
    </source>
</evidence>
<evidence type="ECO:0007744" key="13">
    <source>
        <dbReference type="PDB" id="4O6Z"/>
    </source>
</evidence>
<evidence type="ECO:0007829" key="14">
    <source>
        <dbReference type="PDB" id="4O6Z"/>
    </source>
</evidence>
<accession>Q8I566</accession>
<comment type="function">
    <text evidence="2 3 5">Catalyzes the interconversion of serine to glycine accompanied with the production of 5,10-methylenetetrahydrofolate, a source of one-carbon units used by thymidylate synthase to convert dUMP to dTMP for DNA synthesis (PubMed:11071283, PubMed:19591883, PubMed:24914963). Binds to its own mRNA and to the mRNA of bifunctional dihydrofolate reductase-thymidylate synthase (DHFR-TS) in vitro; the physiological relevance of this interaction is not clear (PubMed:19591883).</text>
</comment>
<comment type="catalytic activity">
    <reaction evidence="2 3 5">
        <text>(6R)-5,10-methylene-5,6,7,8-tetrahydrofolate + glycine + H2O = (6S)-5,6,7,8-tetrahydrofolate + L-serine</text>
        <dbReference type="Rhea" id="RHEA:15481"/>
        <dbReference type="ChEBI" id="CHEBI:15377"/>
        <dbReference type="ChEBI" id="CHEBI:15636"/>
        <dbReference type="ChEBI" id="CHEBI:33384"/>
        <dbReference type="ChEBI" id="CHEBI:57305"/>
        <dbReference type="ChEBI" id="CHEBI:57453"/>
        <dbReference type="EC" id="2.1.2.1"/>
    </reaction>
</comment>
<comment type="cofactor">
    <cofactor evidence="1 3 5">
        <name>pyridoxal 5'-phosphate</name>
        <dbReference type="ChEBI" id="CHEBI:597326"/>
    </cofactor>
</comment>
<comment type="activity regulation">
    <text evidence="5">Redox regulation; active in reducing conditions, inactive in oxidizing conditions. The reduction of the cysteine pairs allows the access binding of the tetrahydrofolate substrate to its binding site. This mechanism appears to be unique to Plasmodium species.</text>
</comment>
<comment type="biophysicochemical properties">
    <kinetics>
        <KM evidence="5">123 uM for L-serine</KM>
        <KM evidence="3">700 uM for L-serine (at 37 degrees Celsius)</KM>
        <KM evidence="5">86 uM for tetrahydrofolate (THF)</KM>
        <KM evidence="3">3400 uM for tetrahydrofolate (THF) (at 37 degrees Celsius)</KM>
        <KM evidence="3">13 uM for pyridoxal 5'-phosphate (at 37 degrees Celsius)</KM>
        <Vmax evidence="3">139.0 pmol/min/ug enzyme towards L-serine (at 37 degrees Celsius)</Vmax>
        <Vmax evidence="3">188.5 pmol/min/ug enzyme towards tetrahydrofolate (THF) (at 37 degrees Celsius)</Vmax>
        <Vmax evidence="3">113.0 pmol/min/ug enzyme towards pyridoxal 5'-phosphate (at 37 degrees Celsius)</Vmax>
        <text evidence="3">kcat is 3.71 sec(-1) with L-serine and tetrahydrofolate as substrates (at 37 degrees Celsius) (PubMed:19591883). kcat is 9.4 min(-1) with L-serine and tetrahydrofolate as substrates (at 37 degrees Celsius) (PubMed:19591883).</text>
    </kinetics>
</comment>
<comment type="pathway">
    <text evidence="9 10">One-carbon metabolism; tetrahydrofolate interconversion.</text>
</comment>
<comment type="subunit">
    <text evidence="3 5">Homodimer.</text>
</comment>
<comment type="subcellular location">
    <subcellularLocation>
        <location evidence="4">Cytoplasm</location>
    </subcellularLocation>
    <subcellularLocation>
        <location evidence="4">Mitochondrion matrix</location>
    </subcellularLocation>
    <subcellularLocation>
        <location evidence="4">Plastid</location>
        <location evidence="4">Apicoplast</location>
    </subcellularLocation>
    <subcellularLocation>
        <location evidence="4">Nucleus</location>
    </subcellularLocation>
    <text evidence="4">Predominantly localizes to the cytoplasm in early trophozoites and postmitotic schizonts. Transiently localizes to the mitochondrion and the apicoplast in late trophozoites and in mitotic schizonts. Partially localizes to the nucleus, especially in late trophozoites and in mitotic schizonts.</text>
</comment>
<comment type="developmental stage">
    <text evidence="4">Expressed during the parasite erythrocyte stages, namely in trophozoites and schizonts.</text>
</comment>
<comment type="similarity">
    <text evidence="8">Belongs to the SHMT family.</text>
</comment>
<organism evidence="12">
    <name type="scientific">Plasmodium falciparum (isolate 3D7)</name>
    <dbReference type="NCBI Taxonomy" id="36329"/>
    <lineage>
        <taxon>Eukaryota</taxon>
        <taxon>Sar</taxon>
        <taxon>Alveolata</taxon>
        <taxon>Apicomplexa</taxon>
        <taxon>Aconoidasida</taxon>
        <taxon>Haemosporida</taxon>
        <taxon>Plasmodiidae</taxon>
        <taxon>Plasmodium</taxon>
        <taxon>Plasmodium (Laverania)</taxon>
    </lineage>
</organism>
<sequence length="442" mass="49780">MFNNDPLQKYDKELFDLLEKEKNRQIETINLIASENLTNTAVRECLGDRISNKYSEGYPHKRYYGGNDYVDKIEELCYKRALEAFNVSEEEWGVNVQPLSGSAANVQALYALVGVKGKIMGMHLCSGGHLTHGFFDEKKKVSITSDLFESKLYKCNSEGYVDMESVRNLALSFQPKVIICGYTSYPRDIDYKGFREICDEVNAYLFADISHISSFVACNLLNNPFTYADVVTTTTHKILRGPRSALIFFNKKRNPGIDQKINSSVFPSFQGGPHNNKIAAVACQLKEVNTPFFKEYTKQVLLNSKALAECLLKRNLDLVTNGTDNHLIVVDLRKYNITGSKLQETCNAINIALNKNTIPSDVDCVSPSGIRIGTPALTTRGCKEKDMEFIADMLLKAILLTDELQQKYGKKLVDFKKGLVNNPKIDELKKEVVQWAKNLPFA</sequence>
<reference evidence="12" key="1">
    <citation type="journal article" date="2002" name="Nature">
        <title>Genome sequence of the human malaria parasite Plasmodium falciparum.</title>
        <authorList>
            <person name="Gardner M.J."/>
            <person name="Hall N."/>
            <person name="Fung E."/>
            <person name="White O."/>
            <person name="Berriman M."/>
            <person name="Hyman R.W."/>
            <person name="Carlton J.M."/>
            <person name="Pain A."/>
            <person name="Nelson K.E."/>
            <person name="Bowman S."/>
            <person name="Paulsen I.T."/>
            <person name="James K.D."/>
            <person name="Eisen J.A."/>
            <person name="Rutherford K.M."/>
            <person name="Salzberg S.L."/>
            <person name="Craig A."/>
            <person name="Kyes S."/>
            <person name="Chan M.-S."/>
            <person name="Nene V."/>
            <person name="Shallom S.J."/>
            <person name="Suh B."/>
            <person name="Peterson J."/>
            <person name="Angiuoli S."/>
            <person name="Pertea M."/>
            <person name="Allen J."/>
            <person name="Selengut J."/>
            <person name="Haft D."/>
            <person name="Mather M.W."/>
            <person name="Vaidya A.B."/>
            <person name="Martin D.M.A."/>
            <person name="Fairlamb A.H."/>
            <person name="Fraunholz M.J."/>
            <person name="Roos D.S."/>
            <person name="Ralph S.A."/>
            <person name="McFadden G.I."/>
            <person name="Cummings L.M."/>
            <person name="Subramanian G.M."/>
            <person name="Mungall C."/>
            <person name="Venter J.C."/>
            <person name="Carucci D.J."/>
            <person name="Hoffman S.L."/>
            <person name="Newbold C."/>
            <person name="Davis R.W."/>
            <person name="Fraser C.M."/>
            <person name="Barrell B.G."/>
        </authorList>
    </citation>
    <scope>NUCLEOTIDE SEQUENCE [LARGE SCALE GENOMIC DNA]</scope>
    <source>
        <strain evidence="12">3D7</strain>
    </source>
</reference>
<reference evidence="8" key="2">
    <citation type="journal article" date="2000" name="Mol. Biochem. Parasitol.">
        <title>Gene organization of a Plasmodium falciparum serine hydroxymethyltransferase and its functional expression in Escherichia coli.</title>
        <authorList>
            <person name="Alfadhli S."/>
            <person name="Rathod P.K."/>
        </authorList>
    </citation>
    <scope>FUNCTION</scope>
    <scope>CATALYTIC ACTIVITY</scope>
    <scope>PATHWAY</scope>
</reference>
<reference evidence="8" key="3">
    <citation type="journal article" date="2009" name="Mol. Biochem. Parasitol.">
        <title>Catalytic and ligand-binding characteristics of Plasmodium falciparum serine hydroxymethyltransferase.</title>
        <authorList>
            <person name="Pang C.K."/>
            <person name="Hunter J.H."/>
            <person name="Gujjar R."/>
            <person name="Podutoori R."/>
            <person name="Bowman J."/>
            <person name="Mudeppa D.G."/>
            <person name="Rathod P.K."/>
        </authorList>
    </citation>
    <scope>FUNCTION</scope>
    <scope>CATALYTIC ACTIVITY</scope>
    <scope>COFACTOR</scope>
    <scope>BIOPHYSICOCHEMICAL PROPERTIES</scope>
    <scope>SUBUNIT</scope>
</reference>
<reference evidence="8" key="4">
    <citation type="journal article" date="2010" name="Malar. J.">
        <title>Dynamic subcellular localization of isoforms of the folate pathway enzyme serine hydroxymethyltransferase (SHMT) through the erythrocytic cycle of Plasmodium falciparum.</title>
        <authorList>
            <person name="Read M."/>
            <person name="Mueller I.B."/>
            <person name="Mitchell S.L."/>
            <person name="Sims P.F."/>
            <person name="Hyde J.E."/>
        </authorList>
    </citation>
    <scope>SUBCELLULAR LOCATION</scope>
    <scope>DEVELOPMENTAL STAGE</scope>
</reference>
<reference evidence="13" key="5">
    <citation type="journal article" date="2014" name="Acta Crystallogr. D">
        <title>The structure of Plasmodium falciparum serine hydroxymethyltransferase reveals a novel redox switch that regulates its activities.</title>
        <authorList>
            <person name="Chitnumsub P."/>
            <person name="Ittarat W."/>
            <person name="Jaruwat A."/>
            <person name="Noytanom K."/>
            <person name="Amornwatcharapong W."/>
            <person name="Pornthanakasem W."/>
            <person name="Chaiyen P."/>
            <person name="Yuthavong Y."/>
            <person name="Leartsakulpanich U."/>
        </authorList>
    </citation>
    <scope>X-RAY CRYSTALLOGRAPHY (2.98 ANGSTROMS) OF MUTANT PHE-292 IN COMPLEX WITH PYRIDOXAL PHOSPHATE</scope>
    <scope>FUNCTION</scope>
    <scope>CATALYTIC ACTIVITY</scope>
    <scope>COFACTOR</scope>
    <scope>ACTIVITY REGULATION</scope>
    <scope>BIOPHYSICOCHEMICAL PROPERTIES</scope>
    <scope>PATHWAY</scope>
    <scope>SUBUNIT</scope>
    <scope>DISULFIDE BOND</scope>
    <scope>PYRIDOXAL PHOSPHATE AT LYS-237</scope>
    <scope>MUTAGENESIS OF CYS-125; HIS-129; PHE-292 AND CYS-364</scope>
</reference>
<protein>
    <recommendedName>
        <fullName evidence="6">Serine hydroxymethyltransferase</fullName>
        <ecNumber evidence="2 3 5">2.1.2.1</ecNumber>
    </recommendedName>
    <alternativeName>
        <fullName evidence="7">PfSHMTc</fullName>
    </alternativeName>
</protein>
<proteinExistence type="evidence at protein level"/>
<feature type="chain" id="PRO_0000449377" description="Serine hydroxymethyltransferase">
    <location>
        <begin position="1"/>
        <end position="442"/>
    </location>
</feature>
<feature type="binding site" evidence="5 13">
    <location>
        <position position="54"/>
    </location>
    <ligand>
        <name>pyridoxal 5'-phosphate</name>
        <dbReference type="ChEBI" id="CHEBI:597326"/>
        <note>ligand shared between dimeric partners</note>
    </ligand>
</feature>
<feature type="binding site" description="in other chain" evidence="5 13">
    <location>
        <begin position="100"/>
        <end position="102"/>
    </location>
    <ligand>
        <name>pyridoxal 5'-phosphate</name>
        <dbReference type="ChEBI" id="CHEBI:597326"/>
        <note>ligand shared between dimeric partners</note>
    </ligand>
</feature>
<feature type="binding site" description="in other chain" evidence="5 13">
    <location>
        <position position="236"/>
    </location>
    <ligand>
        <name>pyridoxal 5'-phosphate</name>
        <dbReference type="ChEBI" id="CHEBI:597326"/>
        <note>ligand shared between dimeric partners</note>
    </ligand>
</feature>
<feature type="binding site" evidence="5 13">
    <location>
        <position position="272"/>
    </location>
    <ligand>
        <name>pyridoxal 5'-phosphate</name>
        <dbReference type="ChEBI" id="CHEBI:597326"/>
        <note>ligand shared between dimeric partners</note>
    </ligand>
</feature>
<feature type="modified residue" description="N6-(pyridoxal phosphate)lysine" evidence="1 5 13">
    <location>
        <position position="237"/>
    </location>
</feature>
<feature type="disulfide bond" description="Inhibitory under oxidizing conditions" evidence="5 13">
    <location>
        <begin position="125"/>
        <end position="364"/>
    </location>
</feature>
<feature type="mutagenesis site" description="Severe loss of catalytic activity characterized by a severe loss in substrate affinity." evidence="5">
    <original>C</original>
    <variation>P</variation>
    <location>
        <position position="125"/>
    </location>
</feature>
<feature type="mutagenesis site" description="Severe loss of catalytic activity." evidence="5">
    <original>H</original>
    <variation>A</variation>
    <location>
        <position position="129"/>
    </location>
</feature>
<feature type="mutagenesis site" description="No effect on catalytic activity." evidence="5">
    <original>F</original>
    <variation>E</variation>
    <location>
        <position position="292"/>
    </location>
</feature>
<feature type="mutagenesis site" description="No effect on catalytic activity. Active in both reducing and non-reducing conditions." evidence="5">
    <original>C</original>
    <variation>A</variation>
    <variation>S</variation>
    <location>
        <position position="364"/>
    </location>
</feature>
<feature type="helix" evidence="14">
    <location>
        <begin position="7"/>
        <end position="10"/>
    </location>
</feature>
<feature type="helix" evidence="14">
    <location>
        <begin position="12"/>
        <end position="26"/>
    </location>
</feature>
<feature type="strand" evidence="14">
    <location>
        <begin position="28"/>
        <end position="30"/>
    </location>
</feature>
<feature type="helix" evidence="14">
    <location>
        <begin position="40"/>
        <end position="46"/>
    </location>
</feature>
<feature type="helix" evidence="14">
    <location>
        <begin position="49"/>
        <end position="52"/>
    </location>
</feature>
<feature type="strand" evidence="14">
    <location>
        <begin position="61"/>
        <end position="65"/>
    </location>
</feature>
<feature type="helix" evidence="14">
    <location>
        <begin position="68"/>
        <end position="84"/>
    </location>
</feature>
<feature type="turn" evidence="14">
    <location>
        <begin position="89"/>
        <end position="91"/>
    </location>
</feature>
<feature type="strand" evidence="14">
    <location>
        <begin position="92"/>
        <end position="95"/>
    </location>
</feature>
<feature type="helix" evidence="14">
    <location>
        <begin position="101"/>
        <end position="113"/>
    </location>
</feature>
<feature type="strand" evidence="14">
    <location>
        <begin position="118"/>
        <end position="122"/>
    </location>
</feature>
<feature type="turn" evidence="14">
    <location>
        <begin position="124"/>
        <end position="127"/>
    </location>
</feature>
<feature type="helix" evidence="14">
    <location>
        <begin position="130"/>
        <end position="132"/>
    </location>
</feature>
<feature type="helix" evidence="14">
    <location>
        <begin position="143"/>
        <end position="146"/>
    </location>
</feature>
<feature type="strand" evidence="14">
    <location>
        <begin position="148"/>
        <end position="153"/>
    </location>
</feature>
<feature type="strand" evidence="14">
    <location>
        <begin position="157"/>
        <end position="159"/>
    </location>
</feature>
<feature type="helix" evidence="14">
    <location>
        <begin position="163"/>
        <end position="172"/>
    </location>
</feature>
<feature type="strand" evidence="14">
    <location>
        <begin position="176"/>
        <end position="180"/>
    </location>
</feature>
<feature type="helix" evidence="14">
    <location>
        <begin position="191"/>
        <end position="200"/>
    </location>
</feature>
<feature type="strand" evidence="14">
    <location>
        <begin position="204"/>
        <end position="208"/>
    </location>
</feature>
<feature type="turn" evidence="14">
    <location>
        <begin position="210"/>
        <end position="212"/>
    </location>
</feature>
<feature type="helix" evidence="14">
    <location>
        <begin position="213"/>
        <end position="217"/>
    </location>
</feature>
<feature type="helix" evidence="14">
    <location>
        <begin position="224"/>
        <end position="226"/>
    </location>
</feature>
<feature type="strand" evidence="14">
    <location>
        <begin position="229"/>
        <end position="236"/>
    </location>
</feature>
<feature type="helix" evidence="14">
    <location>
        <begin position="237"/>
        <end position="239"/>
    </location>
</feature>
<feature type="strand" evidence="14">
    <location>
        <begin position="245"/>
        <end position="250"/>
    </location>
</feature>
<feature type="turn" evidence="14">
    <location>
        <begin position="251"/>
        <end position="253"/>
    </location>
</feature>
<feature type="helix" evidence="14">
    <location>
        <begin position="257"/>
        <end position="265"/>
    </location>
</feature>
<feature type="turn" evidence="14">
    <location>
        <begin position="266"/>
        <end position="269"/>
    </location>
</feature>
<feature type="helix" evidence="14">
    <location>
        <begin position="275"/>
        <end position="288"/>
    </location>
</feature>
<feature type="helix" evidence="14">
    <location>
        <begin position="291"/>
        <end position="313"/>
    </location>
</feature>
<feature type="helix" evidence="14">
    <location>
        <begin position="319"/>
        <end position="321"/>
    </location>
</feature>
<feature type="strand" evidence="14">
    <location>
        <begin position="324"/>
        <end position="331"/>
    </location>
</feature>
<feature type="helix" evidence="14">
    <location>
        <begin position="333"/>
        <end position="335"/>
    </location>
</feature>
<feature type="helix" evidence="14">
    <location>
        <begin position="339"/>
        <end position="348"/>
    </location>
</feature>
<feature type="strand" evidence="14">
    <location>
        <begin position="354"/>
        <end position="356"/>
    </location>
</feature>
<feature type="strand" evidence="14">
    <location>
        <begin position="364"/>
        <end position="366"/>
    </location>
</feature>
<feature type="strand" evidence="14">
    <location>
        <begin position="369"/>
        <end position="374"/>
    </location>
</feature>
<feature type="helix" evidence="14">
    <location>
        <begin position="375"/>
        <end position="379"/>
    </location>
</feature>
<feature type="helix" evidence="14">
    <location>
        <begin position="384"/>
        <end position="386"/>
    </location>
</feature>
<feature type="helix" evidence="14">
    <location>
        <begin position="387"/>
        <end position="408"/>
    </location>
</feature>
<feature type="helix" evidence="14">
    <location>
        <begin position="412"/>
        <end position="417"/>
    </location>
</feature>
<feature type="turn" evidence="14">
    <location>
        <begin position="418"/>
        <end position="420"/>
    </location>
</feature>
<feature type="helix" evidence="14">
    <location>
        <begin position="423"/>
        <end position="438"/>
    </location>
</feature>
<name>GLYA_PLAF7</name>
<dbReference type="EC" id="2.1.2.1" evidence="2 3 5"/>
<dbReference type="EMBL" id="LN999947">
    <property type="protein sequence ID" value="CZT99515.1"/>
    <property type="molecule type" value="Genomic_DNA"/>
</dbReference>
<dbReference type="RefSeq" id="XP_001350750.1">
    <property type="nucleotide sequence ID" value="XM_001350714.1"/>
</dbReference>
<dbReference type="PDB" id="4O6Z">
    <property type="method" value="X-ray"/>
    <property type="resolution" value="2.98 A"/>
    <property type="chains" value="A/B/C/D=1-442"/>
</dbReference>
<dbReference type="PDBsum" id="4O6Z"/>
<dbReference type="SMR" id="Q8I566"/>
<dbReference type="FunCoup" id="Q8I566">
    <property type="interactions" value="311"/>
</dbReference>
<dbReference type="STRING" id="36329.Q8I566"/>
<dbReference type="SwissPalm" id="Q8I566"/>
<dbReference type="PaxDb" id="5833-PFL1720w"/>
<dbReference type="EnsemblProtists" id="CZT99515">
    <property type="protein sequence ID" value="CZT99515"/>
    <property type="gene ID" value="PF3D7_1235600"/>
</dbReference>
<dbReference type="GeneID" id="811396"/>
<dbReference type="KEGG" id="pfa:PF3D7_1235600"/>
<dbReference type="VEuPathDB" id="PlasmoDB:PF3D7_1235600"/>
<dbReference type="HOGENOM" id="CLU_022477_0_2_1"/>
<dbReference type="InParanoid" id="Q8I566"/>
<dbReference type="OMA" id="CQFANVQ"/>
<dbReference type="OrthoDB" id="10265628at2759"/>
<dbReference type="PhylomeDB" id="Q8I566"/>
<dbReference type="Reactome" id="R-PFA-196757">
    <property type="pathway name" value="Metabolism of folate and pterines"/>
</dbReference>
<dbReference type="Reactome" id="R-PFA-71262">
    <property type="pathway name" value="Carnitine synthesis"/>
</dbReference>
<dbReference type="SABIO-RK" id="Q8I566"/>
<dbReference type="UniPathway" id="UPA00193"/>
<dbReference type="EvolutionaryTrace" id="Q8I566"/>
<dbReference type="Proteomes" id="UP000001450">
    <property type="component" value="Chromosome 12"/>
</dbReference>
<dbReference type="GO" id="GO:0020011">
    <property type="term" value="C:apicoplast"/>
    <property type="evidence" value="ECO:0000314"/>
    <property type="project" value="GeneDB"/>
</dbReference>
<dbReference type="GO" id="GO:0005737">
    <property type="term" value="C:cytoplasm"/>
    <property type="evidence" value="ECO:0000314"/>
    <property type="project" value="GeneDB"/>
</dbReference>
<dbReference type="GO" id="GO:0005759">
    <property type="term" value="C:mitochondrial matrix"/>
    <property type="evidence" value="ECO:0007669"/>
    <property type="project" value="UniProtKB-SubCell"/>
</dbReference>
<dbReference type="GO" id="GO:0005739">
    <property type="term" value="C:mitochondrion"/>
    <property type="evidence" value="ECO:0000314"/>
    <property type="project" value="GeneDB"/>
</dbReference>
<dbReference type="GO" id="GO:0005634">
    <property type="term" value="C:nucleus"/>
    <property type="evidence" value="ECO:0007669"/>
    <property type="project" value="UniProtKB-SubCell"/>
</dbReference>
<dbReference type="GO" id="GO:0004372">
    <property type="term" value="F:glycine hydroxymethyltransferase activity"/>
    <property type="evidence" value="ECO:0000314"/>
    <property type="project" value="UniProtKB"/>
</dbReference>
<dbReference type="GO" id="GO:0008168">
    <property type="term" value="F:methyltransferase activity"/>
    <property type="evidence" value="ECO:0007669"/>
    <property type="project" value="UniProtKB-KW"/>
</dbReference>
<dbReference type="GO" id="GO:0042803">
    <property type="term" value="F:protein homodimerization activity"/>
    <property type="evidence" value="ECO:0000314"/>
    <property type="project" value="UniProtKB"/>
</dbReference>
<dbReference type="GO" id="GO:0030170">
    <property type="term" value="F:pyridoxal phosphate binding"/>
    <property type="evidence" value="ECO:0000314"/>
    <property type="project" value="UniProtKB"/>
</dbReference>
<dbReference type="GO" id="GO:0070178">
    <property type="term" value="P:D-serine metabolic process"/>
    <property type="evidence" value="ECO:0000314"/>
    <property type="project" value="GeneDB"/>
</dbReference>
<dbReference type="GO" id="GO:0019264">
    <property type="term" value="P:glycine biosynthetic process from serine"/>
    <property type="evidence" value="ECO:0000318"/>
    <property type="project" value="GO_Central"/>
</dbReference>
<dbReference type="GO" id="GO:0032259">
    <property type="term" value="P:methylation"/>
    <property type="evidence" value="ECO:0007669"/>
    <property type="project" value="UniProtKB-KW"/>
</dbReference>
<dbReference type="GO" id="GO:0006730">
    <property type="term" value="P:one-carbon metabolic process"/>
    <property type="evidence" value="ECO:0000304"/>
    <property type="project" value="GeneDB"/>
</dbReference>
<dbReference type="GO" id="GO:0035999">
    <property type="term" value="P:tetrahydrofolate interconversion"/>
    <property type="evidence" value="ECO:0000314"/>
    <property type="project" value="UniProtKB"/>
</dbReference>
<dbReference type="GO" id="GO:0046653">
    <property type="term" value="P:tetrahydrofolate metabolic process"/>
    <property type="evidence" value="ECO:0000318"/>
    <property type="project" value="GO_Central"/>
</dbReference>
<dbReference type="CDD" id="cd00378">
    <property type="entry name" value="SHMT"/>
    <property type="match status" value="1"/>
</dbReference>
<dbReference type="FunFam" id="3.40.640.10:FF:000108">
    <property type="entry name" value="Serine hydroxymethyltransferase"/>
    <property type="match status" value="1"/>
</dbReference>
<dbReference type="Gene3D" id="3.90.1150.10">
    <property type="entry name" value="Aspartate Aminotransferase, domain 1"/>
    <property type="match status" value="1"/>
</dbReference>
<dbReference type="Gene3D" id="3.40.640.10">
    <property type="entry name" value="Type I PLP-dependent aspartate aminotransferase-like (Major domain)"/>
    <property type="match status" value="1"/>
</dbReference>
<dbReference type="HAMAP" id="MF_00051">
    <property type="entry name" value="SHMT"/>
    <property type="match status" value="1"/>
</dbReference>
<dbReference type="InterPro" id="IPR015424">
    <property type="entry name" value="PyrdxlP-dep_Trfase"/>
</dbReference>
<dbReference type="InterPro" id="IPR015421">
    <property type="entry name" value="PyrdxlP-dep_Trfase_major"/>
</dbReference>
<dbReference type="InterPro" id="IPR015422">
    <property type="entry name" value="PyrdxlP-dep_Trfase_small"/>
</dbReference>
<dbReference type="InterPro" id="IPR001085">
    <property type="entry name" value="Ser_HO-MeTrfase"/>
</dbReference>
<dbReference type="InterPro" id="IPR049943">
    <property type="entry name" value="Ser_HO-MeTrfase-like"/>
</dbReference>
<dbReference type="InterPro" id="IPR039429">
    <property type="entry name" value="SHMT-like_dom"/>
</dbReference>
<dbReference type="NCBIfam" id="NF000586">
    <property type="entry name" value="PRK00011.1"/>
    <property type="match status" value="1"/>
</dbReference>
<dbReference type="PANTHER" id="PTHR11680">
    <property type="entry name" value="SERINE HYDROXYMETHYLTRANSFERASE"/>
    <property type="match status" value="1"/>
</dbReference>
<dbReference type="PANTHER" id="PTHR11680:SF35">
    <property type="entry name" value="SERINE HYDROXYMETHYLTRANSFERASE 1"/>
    <property type="match status" value="1"/>
</dbReference>
<dbReference type="Pfam" id="PF00464">
    <property type="entry name" value="SHMT"/>
    <property type="match status" value="1"/>
</dbReference>
<dbReference type="PIRSF" id="PIRSF000412">
    <property type="entry name" value="SHMT"/>
    <property type="match status" value="1"/>
</dbReference>
<dbReference type="SUPFAM" id="SSF53383">
    <property type="entry name" value="PLP-dependent transferases"/>
    <property type="match status" value="1"/>
</dbReference>